<organism>
    <name type="scientific">Oryza sativa subsp. japonica</name>
    <name type="common">Rice</name>
    <dbReference type="NCBI Taxonomy" id="39947"/>
    <lineage>
        <taxon>Eukaryota</taxon>
        <taxon>Viridiplantae</taxon>
        <taxon>Streptophyta</taxon>
        <taxon>Embryophyta</taxon>
        <taxon>Tracheophyta</taxon>
        <taxon>Spermatophyta</taxon>
        <taxon>Magnoliopsida</taxon>
        <taxon>Liliopsida</taxon>
        <taxon>Poales</taxon>
        <taxon>Poaceae</taxon>
        <taxon>BOP clade</taxon>
        <taxon>Oryzoideae</taxon>
        <taxon>Oryzeae</taxon>
        <taxon>Oryzinae</taxon>
        <taxon>Oryza</taxon>
        <taxon>Oryza sativa</taxon>
    </lineage>
</organism>
<sequence length="267" mass="30391">MGRGKVQLKRIENKINRQVTFSKRRNGLLKKAHEISVLCDAEVAAIVFSPKGKLYEYATDSRMDKILERYERYSYAEKALISAESESEGNWCHEYRKLKAKIETIQKCHKHLMGEDLESLNLKELQQLEQQLESSLKHIISRKSHLMLESISELQKKERSLQEENKALQKELVERQKNVRGQQQVGQWDQTQVQAQAQAQPQAQTSSSSSSMLRDQQALLPPQNICYPPVMMGERNDAAAAAAVAAQGQVQLRIGGLPPWMLSHLNA</sequence>
<dbReference type="EMBL" id="AF058698">
    <property type="protein sequence ID" value="AAF19048.1"/>
    <property type="molecule type" value="mRNA"/>
</dbReference>
<dbReference type="EMBL" id="AB003325">
    <property type="protein sequence ID" value="BAA81883.1"/>
    <property type="molecule type" value="mRNA"/>
</dbReference>
<dbReference type="EMBL" id="AF345911">
    <property type="protein sequence ID" value="AAL09473.1"/>
    <property type="status" value="ALT_FRAME"/>
    <property type="molecule type" value="mRNA"/>
</dbReference>
<dbReference type="EMBL" id="AY551920">
    <property type="protein sequence ID" value="AAS59826.1"/>
    <property type="molecule type" value="mRNA"/>
</dbReference>
<dbReference type="EMBL" id="AP003759">
    <property type="protein sequence ID" value="BAC79555.1"/>
    <property type="status" value="ALT_SEQ"/>
    <property type="molecule type" value="Genomic_DNA"/>
</dbReference>
<dbReference type="EMBL" id="AP004342">
    <property type="protein sequence ID" value="BAD30635.1"/>
    <property type="status" value="ALT_SEQ"/>
    <property type="molecule type" value="Genomic_DNA"/>
</dbReference>
<dbReference type="EMBL" id="AP008213">
    <property type="protein sequence ID" value="BAF20634.1"/>
    <property type="molecule type" value="Genomic_DNA"/>
</dbReference>
<dbReference type="EMBL" id="AP014963">
    <property type="protein sequence ID" value="BAS99737.1"/>
    <property type="molecule type" value="Genomic_DNA"/>
</dbReference>
<dbReference type="RefSeq" id="XP_015645258.1">
    <property type="nucleotide sequence ID" value="XM_015789772.1"/>
</dbReference>
<dbReference type="RefSeq" id="XP_015645259.1">
    <property type="nucleotide sequence ID" value="XM_015789773.1"/>
</dbReference>
<dbReference type="SMR" id="Q6Q9I2"/>
<dbReference type="FunCoup" id="Q6Q9I2">
    <property type="interactions" value="47"/>
</dbReference>
<dbReference type="IntAct" id="Q6Q9I2">
    <property type="interactions" value="4"/>
</dbReference>
<dbReference type="STRING" id="39947.Q6Q9I2"/>
<dbReference type="PaxDb" id="39947-Q6Q9I2"/>
<dbReference type="EnsemblPlants" id="Os07t0108900-02">
    <property type="protein sequence ID" value="Os07t0108900-02"/>
    <property type="gene ID" value="Os07g0108900"/>
</dbReference>
<dbReference type="Gramene" id="Os07t0108900-02">
    <property type="protein sequence ID" value="Os07t0108900-02"/>
    <property type="gene ID" value="Os07g0108900"/>
</dbReference>
<dbReference type="KEGG" id="dosa:Os07g0108900"/>
<dbReference type="eggNOG" id="KOG0014">
    <property type="taxonomic scope" value="Eukaryota"/>
</dbReference>
<dbReference type="HOGENOM" id="CLU_053053_0_2_1"/>
<dbReference type="InParanoid" id="Q6Q9I2"/>
<dbReference type="OMA" id="KSHLMLE"/>
<dbReference type="OrthoDB" id="1933443at2759"/>
<dbReference type="PlantReactome" id="R-OSA-8934036">
    <property type="pathway name" value="Long day regulated expression of florigens"/>
</dbReference>
<dbReference type="PlantReactome" id="R-OSA-8934257">
    <property type="pathway name" value="Transition from vegetative to reproductive shoot apical meristem"/>
</dbReference>
<dbReference type="PlantReactome" id="R-OSA-9608931">
    <property type="pathway name" value="Floral bracts development"/>
</dbReference>
<dbReference type="PlantReactome" id="R-OSA-9609102">
    <property type="pathway name" value="Flower development"/>
</dbReference>
<dbReference type="Proteomes" id="UP000000763">
    <property type="component" value="Chromosome 7"/>
</dbReference>
<dbReference type="Proteomes" id="UP000059680">
    <property type="component" value="Chromosome 7"/>
</dbReference>
<dbReference type="ExpressionAtlas" id="Q6Q9I2">
    <property type="expression patterns" value="baseline and differential"/>
</dbReference>
<dbReference type="GO" id="GO:0005634">
    <property type="term" value="C:nucleus"/>
    <property type="evidence" value="ECO:0007669"/>
    <property type="project" value="UniProtKB-SubCell"/>
</dbReference>
<dbReference type="GO" id="GO:0000981">
    <property type="term" value="F:DNA-binding transcription factor activity, RNA polymerase II-specific"/>
    <property type="evidence" value="ECO:0000318"/>
    <property type="project" value="GO_Central"/>
</dbReference>
<dbReference type="GO" id="GO:0046983">
    <property type="term" value="F:protein dimerization activity"/>
    <property type="evidence" value="ECO:0007669"/>
    <property type="project" value="InterPro"/>
</dbReference>
<dbReference type="GO" id="GO:0000978">
    <property type="term" value="F:RNA polymerase II cis-regulatory region sequence-specific DNA binding"/>
    <property type="evidence" value="ECO:0000318"/>
    <property type="project" value="GO_Central"/>
</dbReference>
<dbReference type="GO" id="GO:0045944">
    <property type="term" value="P:positive regulation of transcription by RNA polymerase II"/>
    <property type="evidence" value="ECO:0007669"/>
    <property type="project" value="InterPro"/>
</dbReference>
<dbReference type="GO" id="GO:0006357">
    <property type="term" value="P:regulation of transcription by RNA polymerase II"/>
    <property type="evidence" value="ECO:0000318"/>
    <property type="project" value="GO_Central"/>
</dbReference>
<dbReference type="CDD" id="cd00265">
    <property type="entry name" value="MADS_MEF2_like"/>
    <property type="match status" value="1"/>
</dbReference>
<dbReference type="FunFam" id="3.40.1810.10:FF:000003">
    <property type="entry name" value="MADS-box transcription factor MADS-MC"/>
    <property type="match status" value="1"/>
</dbReference>
<dbReference type="Gene3D" id="3.40.1810.10">
    <property type="entry name" value="Transcription factor, MADS-box"/>
    <property type="match status" value="1"/>
</dbReference>
<dbReference type="InterPro" id="IPR050142">
    <property type="entry name" value="MADS-box/MEF2_TF"/>
</dbReference>
<dbReference type="InterPro" id="IPR033896">
    <property type="entry name" value="MEF2-like_N"/>
</dbReference>
<dbReference type="InterPro" id="IPR002487">
    <property type="entry name" value="TF_Kbox"/>
</dbReference>
<dbReference type="InterPro" id="IPR002100">
    <property type="entry name" value="TF_MADSbox"/>
</dbReference>
<dbReference type="InterPro" id="IPR036879">
    <property type="entry name" value="TF_MADSbox_sf"/>
</dbReference>
<dbReference type="PANTHER" id="PTHR48019">
    <property type="entry name" value="SERUM RESPONSE FACTOR HOMOLOG"/>
    <property type="match status" value="1"/>
</dbReference>
<dbReference type="Pfam" id="PF01486">
    <property type="entry name" value="K-box"/>
    <property type="match status" value="1"/>
</dbReference>
<dbReference type="Pfam" id="PF00319">
    <property type="entry name" value="SRF-TF"/>
    <property type="match status" value="1"/>
</dbReference>
<dbReference type="PRINTS" id="PR00404">
    <property type="entry name" value="MADSDOMAIN"/>
</dbReference>
<dbReference type="SMART" id="SM00432">
    <property type="entry name" value="MADS"/>
    <property type="match status" value="1"/>
</dbReference>
<dbReference type="SUPFAM" id="SSF55455">
    <property type="entry name" value="SRF-like"/>
    <property type="match status" value="1"/>
</dbReference>
<dbReference type="PROSITE" id="PS51297">
    <property type="entry name" value="K_BOX"/>
    <property type="match status" value="1"/>
</dbReference>
<dbReference type="PROSITE" id="PS50066">
    <property type="entry name" value="MADS_BOX_2"/>
    <property type="match status" value="1"/>
</dbReference>
<proteinExistence type="evidence at protein level"/>
<reference key="1">
    <citation type="journal article" date="1999" name="Plant Physiol.">
        <title>Determination of the motif responsible for interaction between the rice APETALA1/AGAMOUS-LIKE9 family proteins using a yeast two-hybrid system.</title>
        <authorList>
            <person name="Moon Y.-H."/>
            <person name="Kang H.-G."/>
            <person name="Jung J.-Y."/>
            <person name="Jeon J.-S."/>
            <person name="Sung S.-K."/>
            <person name="An G."/>
        </authorList>
    </citation>
    <scope>NUCLEOTIDE SEQUENCE [MRNA]</scope>
    <scope>INTERACTION WITH MADS6</scope>
    <source>
        <tissue>Flower</tissue>
    </source>
</reference>
<reference key="2">
    <citation type="journal article" date="1999" name="DNA Res.">
        <title>Isolation and characterization of rice MADS box gene homologues and their RFLP mapping.</title>
        <authorList>
            <person name="Shinozuka Y."/>
            <person name="Kojima S."/>
            <person name="Shomura A."/>
            <person name="Ichimura H."/>
            <person name="Yano M."/>
            <person name="Yamamoto K."/>
            <person name="Sasaki T."/>
        </authorList>
    </citation>
    <scope>NUCLEOTIDE SEQUENCE [MRNA]</scope>
    <source>
        <strain>cv. Nipponbare</strain>
        <tissue>Panicle</tissue>
    </source>
</reference>
<reference key="3">
    <citation type="submission" date="2001-02" db="EMBL/GenBank/DDBJ databases">
        <authorList>
            <person name="Gao Z."/>
            <person name="Chen R."/>
            <person name="Jia H.-W."/>
            <person name="Sun C.-R."/>
        </authorList>
    </citation>
    <scope>NUCLEOTIDE SEQUENCE [MRNA]</scope>
</reference>
<reference key="4">
    <citation type="submission" date="2004-02" db="EMBL/GenBank/DDBJ databases">
        <authorList>
            <person name="Yao Q."/>
            <person name="Peng R."/>
            <person name="Xiong A."/>
        </authorList>
    </citation>
    <scope>NUCLEOTIDE SEQUENCE [MRNA]</scope>
</reference>
<reference key="5">
    <citation type="journal article" date="2005" name="Nature">
        <title>The map-based sequence of the rice genome.</title>
        <authorList>
            <consortium name="International rice genome sequencing project (IRGSP)"/>
        </authorList>
    </citation>
    <scope>NUCLEOTIDE SEQUENCE [LARGE SCALE GENOMIC DNA]</scope>
    <source>
        <strain>cv. Nipponbare</strain>
    </source>
</reference>
<reference key="6">
    <citation type="journal article" date="2008" name="Nucleic Acids Res.">
        <title>The rice annotation project database (RAP-DB): 2008 update.</title>
        <authorList>
            <consortium name="The rice annotation project (RAP)"/>
        </authorList>
    </citation>
    <scope>GENOME REANNOTATION</scope>
    <source>
        <strain>cv. Nipponbare</strain>
    </source>
</reference>
<reference key="7">
    <citation type="journal article" date="2013" name="Rice">
        <title>Improvement of the Oryza sativa Nipponbare reference genome using next generation sequence and optical map data.</title>
        <authorList>
            <person name="Kawahara Y."/>
            <person name="de la Bastide M."/>
            <person name="Hamilton J.P."/>
            <person name="Kanamori H."/>
            <person name="McCombie W.R."/>
            <person name="Ouyang S."/>
            <person name="Schwartz D.C."/>
            <person name="Tanaka T."/>
            <person name="Wu J."/>
            <person name="Zhou S."/>
            <person name="Childs K.L."/>
            <person name="Davidson R.M."/>
            <person name="Lin H."/>
            <person name="Quesada-Ocampo L."/>
            <person name="Vaillancourt B."/>
            <person name="Sakai H."/>
            <person name="Lee S.S."/>
            <person name="Kim J."/>
            <person name="Numa H."/>
            <person name="Itoh T."/>
            <person name="Buell C.R."/>
            <person name="Matsumoto T."/>
        </authorList>
    </citation>
    <scope>GENOME REANNOTATION</scope>
    <source>
        <strain>cv. Nipponbare</strain>
    </source>
</reference>
<reference key="8">
    <citation type="journal article" date="2000" name="Plant Cell Physiol.">
        <title>Spatially and temporally regulated expression of rice MADS box genes with similarity to Arabidopsis class A, B and C genes.</title>
        <authorList>
            <person name="Kyozuka J."/>
            <person name="Kobayashi T."/>
            <person name="Morita M."/>
            <person name="Shimamoto K."/>
        </authorList>
    </citation>
    <scope>DEVELOPMENTAL STAGE</scope>
</reference>
<reference key="9">
    <citation type="journal article" date="2000" name="Plant Mol. Biol.">
        <title>Two rice MADS domain proteins interact with OsMADS1.</title>
        <authorList>
            <person name="Lim J."/>
            <person name="Moon Y.-H."/>
            <person name="An G."/>
            <person name="Jang S.K."/>
        </authorList>
    </citation>
    <scope>INTERACTION WITH MADS1</scope>
</reference>
<comment type="function">
    <text>Probable transcription factor.</text>
</comment>
<comment type="subunit">
    <text>May interact with the K-box of MADS1 and MADS6.</text>
</comment>
<comment type="interaction">
    <interactant intactId="EBI-627918">
        <id>Q6Q9I2</id>
    </interactant>
    <interactant intactId="EBI-627957">
        <id>Q10PZ9</id>
        <label>MADS1</label>
    </interactant>
    <organismsDiffer>false</organismsDiffer>
    <experiments>4</experiments>
</comment>
<comment type="interaction">
    <interactant intactId="EBI-627918">
        <id>Q6Q9I2</id>
    </interactant>
    <interactant intactId="EBI-627980">
        <id>Q6EU39</id>
        <label>MADS6</label>
    </interactant>
    <organismsDiffer>false</organismsDiffer>
    <experiments>3</experiments>
</comment>
<comment type="subcellular location">
    <subcellularLocation>
        <location evidence="5">Nucleus</location>
    </subcellularLocation>
</comment>
<comment type="developmental stage">
    <text evidence="4">Expressed in the floral meristem at very early stage of the spikelet (rice flower) development. Expressed in lemmas, paleas and lodicules from early to late stage of flower development.</text>
</comment>
<comment type="sequence caution" evidence="5">
    <conflict type="frameshift">
        <sequence resource="EMBL-CDS" id="AAL09473"/>
    </conflict>
</comment>
<comment type="sequence caution" evidence="5">
    <conflict type="erroneous gene model prediction">
        <sequence resource="EMBL-CDS" id="BAC79555"/>
    </conflict>
</comment>
<comment type="sequence caution" evidence="5">
    <conflict type="erroneous gene model prediction">
        <sequence resource="EMBL-CDS" id="BAD30635"/>
    </conflict>
</comment>
<protein>
    <recommendedName>
        <fullName>MADS-box transcription factor 15</fullName>
    </recommendedName>
    <alternativeName>
        <fullName>FDRMADS3</fullName>
    </alternativeName>
    <alternativeName>
        <fullName>OsMADS15</fullName>
    </alternativeName>
    <alternativeName>
        <fullName>Protein APETALA1-like A</fullName>
    </alternativeName>
    <alternativeName>
        <fullName>RMADS215</fullName>
    </alternativeName>
</protein>
<feature type="chain" id="PRO_0000229900" description="MADS-box transcription factor 15">
    <location>
        <begin position="1"/>
        <end position="267"/>
    </location>
</feature>
<feature type="domain" description="MADS-box" evidence="1">
    <location>
        <begin position="1"/>
        <end position="61"/>
    </location>
</feature>
<feature type="domain" description="K-box" evidence="2">
    <location>
        <begin position="88"/>
        <end position="178"/>
    </location>
</feature>
<feature type="region of interest" description="Disordered" evidence="3">
    <location>
        <begin position="179"/>
        <end position="215"/>
    </location>
</feature>
<feature type="compositionally biased region" description="Low complexity" evidence="3">
    <location>
        <begin position="182"/>
        <end position="215"/>
    </location>
</feature>
<feature type="sequence conflict" description="In Ref. 4." evidence="5" ref="4">
    <original>M</original>
    <variation>MM</variation>
    <location>
        <position position="1"/>
    </location>
</feature>
<feature type="sequence conflict" description="In Ref. 3; AAL09473." evidence="5" ref="3">
    <original>KI</original>
    <variation>SM</variation>
    <location>
        <begin position="14"/>
        <end position="15"/>
    </location>
</feature>
<feature type="sequence conflict" description="In Ref. 1; AAF19048." evidence="5" ref="1">
    <original>L</original>
    <variation>H</variation>
    <location>
        <position position="117"/>
    </location>
</feature>
<feature type="sequence conflict" description="In Ref. 3; AAL09473." evidence="5" ref="3">
    <original>I</original>
    <variation>R</variation>
    <location>
        <position position="140"/>
    </location>
</feature>
<feature type="sequence conflict" description="In Ref. 3; AAL09473." evidence="5" ref="3">
    <original>P</original>
    <variation>S</variation>
    <location>
        <position position="221"/>
    </location>
</feature>
<feature type="sequence conflict" description="In Ref. 3; AAL09473." evidence="5" ref="3">
    <original>E</original>
    <variation>Q</variation>
    <location>
        <position position="234"/>
    </location>
</feature>
<feature type="sequence conflict" description="In Ref. 3; AAL09473." evidence="5" ref="3">
    <original>L</original>
    <variation>F</variation>
    <location>
        <position position="257"/>
    </location>
</feature>
<gene>
    <name type="primary">MADS15</name>
    <name type="synonym">RAP1A</name>
    <name type="ordered locus">Os07g0108900</name>
    <name type="ordered locus">LOC_Os07g01820</name>
    <name type="ORF">OJ1567_G09.109-1</name>
    <name type="ORF">P0585H11.124-1</name>
</gene>
<accession>Q6Q9I2</accession>
<accession>Q0D939</accession>
<accession>Q7XIU8</accession>
<accession>Q947B8</accession>
<accession>Q9SEW9</accession>
<accession>Q9XJ63</accession>
<evidence type="ECO:0000255" key="1">
    <source>
        <dbReference type="PROSITE-ProRule" id="PRU00251"/>
    </source>
</evidence>
<evidence type="ECO:0000255" key="2">
    <source>
        <dbReference type="PROSITE-ProRule" id="PRU00629"/>
    </source>
</evidence>
<evidence type="ECO:0000256" key="3">
    <source>
        <dbReference type="SAM" id="MobiDB-lite"/>
    </source>
</evidence>
<evidence type="ECO:0000269" key="4">
    <source>
    </source>
</evidence>
<evidence type="ECO:0000305" key="5"/>
<name>MAD15_ORYSJ</name>
<keyword id="KW-0238">DNA-binding</keyword>
<keyword id="KW-0539">Nucleus</keyword>
<keyword id="KW-1185">Reference proteome</keyword>
<keyword id="KW-0804">Transcription</keyword>
<keyword id="KW-0805">Transcription regulation</keyword>